<organism>
    <name type="scientific">Verminephrobacter eiseniae (strain EF01-2)</name>
    <dbReference type="NCBI Taxonomy" id="391735"/>
    <lineage>
        <taxon>Bacteria</taxon>
        <taxon>Pseudomonadati</taxon>
        <taxon>Pseudomonadota</taxon>
        <taxon>Betaproteobacteria</taxon>
        <taxon>Burkholderiales</taxon>
        <taxon>Comamonadaceae</taxon>
        <taxon>Verminephrobacter</taxon>
    </lineage>
</organism>
<proteinExistence type="inferred from homology"/>
<protein>
    <recommendedName>
        <fullName evidence="1">Small ribosomal subunit protein uS19</fullName>
    </recommendedName>
    <alternativeName>
        <fullName evidence="2">30S ribosomal protein S19</fullName>
    </alternativeName>
</protein>
<evidence type="ECO:0000255" key="1">
    <source>
        <dbReference type="HAMAP-Rule" id="MF_00531"/>
    </source>
</evidence>
<evidence type="ECO:0000305" key="2"/>
<feature type="chain" id="PRO_1000051142" description="Small ribosomal subunit protein uS19">
    <location>
        <begin position="1"/>
        <end position="91"/>
    </location>
</feature>
<reference key="1">
    <citation type="submission" date="2006-12" db="EMBL/GenBank/DDBJ databases">
        <title>Complete sequence of chromosome 1 of Verminephrobacter eiseniae EF01-2.</title>
        <authorList>
            <person name="Copeland A."/>
            <person name="Lucas S."/>
            <person name="Lapidus A."/>
            <person name="Barry K."/>
            <person name="Detter J.C."/>
            <person name="Glavina del Rio T."/>
            <person name="Dalin E."/>
            <person name="Tice H."/>
            <person name="Pitluck S."/>
            <person name="Chertkov O."/>
            <person name="Brettin T."/>
            <person name="Bruce D."/>
            <person name="Han C."/>
            <person name="Tapia R."/>
            <person name="Gilna P."/>
            <person name="Schmutz J."/>
            <person name="Larimer F."/>
            <person name="Land M."/>
            <person name="Hauser L."/>
            <person name="Kyrpides N."/>
            <person name="Kim E."/>
            <person name="Stahl D."/>
            <person name="Richardson P."/>
        </authorList>
    </citation>
    <scope>NUCLEOTIDE SEQUENCE [LARGE SCALE GENOMIC DNA]</scope>
    <source>
        <strain>EF01-2</strain>
    </source>
</reference>
<accession>A1WHC9</accession>
<comment type="function">
    <text evidence="1">Protein S19 forms a complex with S13 that binds strongly to the 16S ribosomal RNA.</text>
</comment>
<comment type="similarity">
    <text evidence="1">Belongs to the universal ribosomal protein uS19 family.</text>
</comment>
<gene>
    <name evidence="1" type="primary">rpsS</name>
    <name type="ordered locus">Veis_1268</name>
</gene>
<name>RS19_VEREI</name>
<dbReference type="EMBL" id="CP000542">
    <property type="protein sequence ID" value="ABM57036.1"/>
    <property type="molecule type" value="Genomic_DNA"/>
</dbReference>
<dbReference type="RefSeq" id="WP_011809046.1">
    <property type="nucleotide sequence ID" value="NC_008786.1"/>
</dbReference>
<dbReference type="SMR" id="A1WHC9"/>
<dbReference type="STRING" id="391735.Veis_1268"/>
<dbReference type="GeneID" id="76459915"/>
<dbReference type="KEGG" id="vei:Veis_1268"/>
<dbReference type="eggNOG" id="COG0185">
    <property type="taxonomic scope" value="Bacteria"/>
</dbReference>
<dbReference type="HOGENOM" id="CLU_144911_0_1_4"/>
<dbReference type="OrthoDB" id="9797833at2"/>
<dbReference type="Proteomes" id="UP000000374">
    <property type="component" value="Chromosome"/>
</dbReference>
<dbReference type="GO" id="GO:0005737">
    <property type="term" value="C:cytoplasm"/>
    <property type="evidence" value="ECO:0007669"/>
    <property type="project" value="UniProtKB-ARBA"/>
</dbReference>
<dbReference type="GO" id="GO:0015935">
    <property type="term" value="C:small ribosomal subunit"/>
    <property type="evidence" value="ECO:0007669"/>
    <property type="project" value="InterPro"/>
</dbReference>
<dbReference type="GO" id="GO:0019843">
    <property type="term" value="F:rRNA binding"/>
    <property type="evidence" value="ECO:0007669"/>
    <property type="project" value="UniProtKB-UniRule"/>
</dbReference>
<dbReference type="GO" id="GO:0003735">
    <property type="term" value="F:structural constituent of ribosome"/>
    <property type="evidence" value="ECO:0007669"/>
    <property type="project" value="InterPro"/>
</dbReference>
<dbReference type="GO" id="GO:0000028">
    <property type="term" value="P:ribosomal small subunit assembly"/>
    <property type="evidence" value="ECO:0007669"/>
    <property type="project" value="TreeGrafter"/>
</dbReference>
<dbReference type="GO" id="GO:0006412">
    <property type="term" value="P:translation"/>
    <property type="evidence" value="ECO:0007669"/>
    <property type="project" value="UniProtKB-UniRule"/>
</dbReference>
<dbReference type="FunFam" id="3.30.860.10:FF:000001">
    <property type="entry name" value="30S ribosomal protein S19"/>
    <property type="match status" value="1"/>
</dbReference>
<dbReference type="Gene3D" id="3.30.860.10">
    <property type="entry name" value="30s Ribosomal Protein S19, Chain A"/>
    <property type="match status" value="1"/>
</dbReference>
<dbReference type="HAMAP" id="MF_00531">
    <property type="entry name" value="Ribosomal_uS19"/>
    <property type="match status" value="1"/>
</dbReference>
<dbReference type="InterPro" id="IPR002222">
    <property type="entry name" value="Ribosomal_uS19"/>
</dbReference>
<dbReference type="InterPro" id="IPR005732">
    <property type="entry name" value="Ribosomal_uS19_bac-type"/>
</dbReference>
<dbReference type="InterPro" id="IPR020934">
    <property type="entry name" value="Ribosomal_uS19_CS"/>
</dbReference>
<dbReference type="InterPro" id="IPR023575">
    <property type="entry name" value="Ribosomal_uS19_SF"/>
</dbReference>
<dbReference type="NCBIfam" id="TIGR01050">
    <property type="entry name" value="rpsS_bact"/>
    <property type="match status" value="1"/>
</dbReference>
<dbReference type="PANTHER" id="PTHR11880">
    <property type="entry name" value="RIBOSOMAL PROTEIN S19P FAMILY MEMBER"/>
    <property type="match status" value="1"/>
</dbReference>
<dbReference type="PANTHER" id="PTHR11880:SF8">
    <property type="entry name" value="SMALL RIBOSOMAL SUBUNIT PROTEIN US19M"/>
    <property type="match status" value="1"/>
</dbReference>
<dbReference type="Pfam" id="PF00203">
    <property type="entry name" value="Ribosomal_S19"/>
    <property type="match status" value="1"/>
</dbReference>
<dbReference type="PIRSF" id="PIRSF002144">
    <property type="entry name" value="Ribosomal_S19"/>
    <property type="match status" value="1"/>
</dbReference>
<dbReference type="PRINTS" id="PR00975">
    <property type="entry name" value="RIBOSOMALS19"/>
</dbReference>
<dbReference type="SUPFAM" id="SSF54570">
    <property type="entry name" value="Ribosomal protein S19"/>
    <property type="match status" value="1"/>
</dbReference>
<dbReference type="PROSITE" id="PS00323">
    <property type="entry name" value="RIBOSOMAL_S19"/>
    <property type="match status" value="1"/>
</dbReference>
<sequence>MTRSLKKGPFVDHHLLAKVEKAVATKDKKPVKTWSRRSMVLPEFIGLTIAVHNGKQHVPVYVTDQMVGHKLGEFALTRTFKGHPADKKVKK</sequence>
<keyword id="KW-1185">Reference proteome</keyword>
<keyword id="KW-0687">Ribonucleoprotein</keyword>
<keyword id="KW-0689">Ribosomal protein</keyword>
<keyword id="KW-0694">RNA-binding</keyword>
<keyword id="KW-0699">rRNA-binding</keyword>